<evidence type="ECO:0000255" key="1">
    <source>
        <dbReference type="HAMAP-Rule" id="MF_01454"/>
    </source>
</evidence>
<evidence type="ECO:0000255" key="2">
    <source>
        <dbReference type="PROSITE-ProRule" id="PRU01229"/>
    </source>
</evidence>
<evidence type="ECO:0000255" key="3">
    <source>
        <dbReference type="PROSITE-ProRule" id="PRU01231"/>
    </source>
</evidence>
<name>OBG_CLOB1</name>
<reference key="1">
    <citation type="journal article" date="2007" name="PLoS ONE">
        <title>Analysis of the neurotoxin complex genes in Clostridium botulinum A1-A4 and B1 strains: BoNT/A3, /Ba4 and /B1 clusters are located within plasmids.</title>
        <authorList>
            <person name="Smith T.J."/>
            <person name="Hill K.K."/>
            <person name="Foley B.T."/>
            <person name="Detter J.C."/>
            <person name="Munk A.C."/>
            <person name="Bruce D.C."/>
            <person name="Doggett N.A."/>
            <person name="Smith L.A."/>
            <person name="Marks J.D."/>
            <person name="Xie G."/>
            <person name="Brettin T.S."/>
        </authorList>
    </citation>
    <scope>NUCLEOTIDE SEQUENCE [LARGE SCALE GENOMIC DNA]</scope>
    <source>
        <strain>ATCC 19397 / Type A</strain>
    </source>
</reference>
<dbReference type="EC" id="3.6.5.-" evidence="1"/>
<dbReference type="EMBL" id="CP000726">
    <property type="protein sequence ID" value="ABS33680.1"/>
    <property type="molecule type" value="Genomic_DNA"/>
</dbReference>
<dbReference type="SMR" id="A7FXU6"/>
<dbReference type="KEGG" id="cba:CLB_3011"/>
<dbReference type="HOGENOM" id="CLU_011747_2_1_9"/>
<dbReference type="GO" id="GO:0005737">
    <property type="term" value="C:cytoplasm"/>
    <property type="evidence" value="ECO:0007669"/>
    <property type="project" value="UniProtKB-SubCell"/>
</dbReference>
<dbReference type="GO" id="GO:0005525">
    <property type="term" value="F:GTP binding"/>
    <property type="evidence" value="ECO:0007669"/>
    <property type="project" value="UniProtKB-UniRule"/>
</dbReference>
<dbReference type="GO" id="GO:0003924">
    <property type="term" value="F:GTPase activity"/>
    <property type="evidence" value="ECO:0007669"/>
    <property type="project" value="UniProtKB-UniRule"/>
</dbReference>
<dbReference type="GO" id="GO:0000287">
    <property type="term" value="F:magnesium ion binding"/>
    <property type="evidence" value="ECO:0007669"/>
    <property type="project" value="InterPro"/>
</dbReference>
<dbReference type="GO" id="GO:0042254">
    <property type="term" value="P:ribosome biogenesis"/>
    <property type="evidence" value="ECO:0007669"/>
    <property type="project" value="UniProtKB-UniRule"/>
</dbReference>
<dbReference type="CDD" id="cd01898">
    <property type="entry name" value="Obg"/>
    <property type="match status" value="1"/>
</dbReference>
<dbReference type="FunFam" id="2.70.210.12:FF:000001">
    <property type="entry name" value="GTPase Obg"/>
    <property type="match status" value="1"/>
</dbReference>
<dbReference type="Gene3D" id="3.30.300.350">
    <property type="entry name" value="GTP-binding protein OBG, C-terminal domain"/>
    <property type="match status" value="1"/>
</dbReference>
<dbReference type="Gene3D" id="2.70.210.12">
    <property type="entry name" value="GTP1/OBG domain"/>
    <property type="match status" value="1"/>
</dbReference>
<dbReference type="Gene3D" id="3.40.50.300">
    <property type="entry name" value="P-loop containing nucleotide triphosphate hydrolases"/>
    <property type="match status" value="1"/>
</dbReference>
<dbReference type="HAMAP" id="MF_01454">
    <property type="entry name" value="GTPase_Obg"/>
    <property type="match status" value="1"/>
</dbReference>
<dbReference type="InterPro" id="IPR031167">
    <property type="entry name" value="G_OBG"/>
</dbReference>
<dbReference type="InterPro" id="IPR006073">
    <property type="entry name" value="GTP-bd"/>
</dbReference>
<dbReference type="InterPro" id="IPR014100">
    <property type="entry name" value="GTP-bd_Obg/CgtA"/>
</dbReference>
<dbReference type="InterPro" id="IPR036346">
    <property type="entry name" value="GTP-bd_prot_GTP1/OBG_C_sf"/>
</dbReference>
<dbReference type="InterPro" id="IPR006074">
    <property type="entry name" value="GTP1-OBG_CS"/>
</dbReference>
<dbReference type="InterPro" id="IPR006169">
    <property type="entry name" value="GTP1_OBG_dom"/>
</dbReference>
<dbReference type="InterPro" id="IPR036726">
    <property type="entry name" value="GTP1_OBG_dom_sf"/>
</dbReference>
<dbReference type="InterPro" id="IPR045086">
    <property type="entry name" value="OBG_GTPase"/>
</dbReference>
<dbReference type="InterPro" id="IPR015349">
    <property type="entry name" value="OCT_dom"/>
</dbReference>
<dbReference type="InterPro" id="IPR027417">
    <property type="entry name" value="P-loop_NTPase"/>
</dbReference>
<dbReference type="InterPro" id="IPR005225">
    <property type="entry name" value="Small_GTP-bd"/>
</dbReference>
<dbReference type="NCBIfam" id="TIGR02729">
    <property type="entry name" value="Obg_CgtA"/>
    <property type="match status" value="1"/>
</dbReference>
<dbReference type="NCBIfam" id="TIGR03595">
    <property type="entry name" value="Obg_CgtA_exten"/>
    <property type="match status" value="1"/>
</dbReference>
<dbReference type="NCBIfam" id="NF008954">
    <property type="entry name" value="PRK12296.1"/>
    <property type="match status" value="1"/>
</dbReference>
<dbReference type="NCBIfam" id="NF008955">
    <property type="entry name" value="PRK12297.1"/>
    <property type="match status" value="1"/>
</dbReference>
<dbReference type="NCBIfam" id="NF008956">
    <property type="entry name" value="PRK12299.1"/>
    <property type="match status" value="1"/>
</dbReference>
<dbReference type="NCBIfam" id="TIGR00231">
    <property type="entry name" value="small_GTP"/>
    <property type="match status" value="1"/>
</dbReference>
<dbReference type="PANTHER" id="PTHR11702">
    <property type="entry name" value="DEVELOPMENTALLY REGULATED GTP-BINDING PROTEIN-RELATED"/>
    <property type="match status" value="1"/>
</dbReference>
<dbReference type="PANTHER" id="PTHR11702:SF31">
    <property type="entry name" value="MITOCHONDRIAL RIBOSOME-ASSOCIATED GTPASE 2"/>
    <property type="match status" value="1"/>
</dbReference>
<dbReference type="Pfam" id="PF09269">
    <property type="entry name" value="DUF1967"/>
    <property type="match status" value="1"/>
</dbReference>
<dbReference type="Pfam" id="PF01018">
    <property type="entry name" value="GTP1_OBG"/>
    <property type="match status" value="1"/>
</dbReference>
<dbReference type="Pfam" id="PF01926">
    <property type="entry name" value="MMR_HSR1"/>
    <property type="match status" value="1"/>
</dbReference>
<dbReference type="PIRSF" id="PIRSF002401">
    <property type="entry name" value="GTP_bd_Obg/CgtA"/>
    <property type="match status" value="1"/>
</dbReference>
<dbReference type="PRINTS" id="PR00326">
    <property type="entry name" value="GTP1OBG"/>
</dbReference>
<dbReference type="SUPFAM" id="SSF102741">
    <property type="entry name" value="Obg GTP-binding protein C-terminal domain"/>
    <property type="match status" value="1"/>
</dbReference>
<dbReference type="SUPFAM" id="SSF82051">
    <property type="entry name" value="Obg GTP-binding protein N-terminal domain"/>
    <property type="match status" value="1"/>
</dbReference>
<dbReference type="SUPFAM" id="SSF52540">
    <property type="entry name" value="P-loop containing nucleoside triphosphate hydrolases"/>
    <property type="match status" value="1"/>
</dbReference>
<dbReference type="PROSITE" id="PS51710">
    <property type="entry name" value="G_OBG"/>
    <property type="match status" value="1"/>
</dbReference>
<dbReference type="PROSITE" id="PS00905">
    <property type="entry name" value="GTP1_OBG"/>
    <property type="match status" value="1"/>
</dbReference>
<dbReference type="PROSITE" id="PS51883">
    <property type="entry name" value="OBG"/>
    <property type="match status" value="1"/>
</dbReference>
<dbReference type="PROSITE" id="PS51881">
    <property type="entry name" value="OCT"/>
    <property type="match status" value="1"/>
</dbReference>
<protein>
    <recommendedName>
        <fullName evidence="1">GTPase Obg</fullName>
        <ecNumber evidence="1">3.6.5.-</ecNumber>
    </recommendedName>
    <alternativeName>
        <fullName evidence="1">GTP-binding protein Obg</fullName>
    </alternativeName>
</protein>
<gene>
    <name evidence="1" type="primary">obg</name>
    <name type="ordered locus">CLB_3011</name>
</gene>
<sequence length="424" mass="47246">MFIDTAKIFVKSGKGGDGSISFRREKYIAFGGPDGGDGGKGGNVVLVVDPNMTTLLDFTYKRKYKAEPGGNGAGSKCFGKNGKDLHIKVPMGTIVKDAETDKIMADLSKPEDSYVVAKGGRGGKGNCRFTTPTRQAPDFAEPGMPEEERWIKLELKLLADVGLIGFPNVGKSTLLSVVSKARPKIANYHFTTLKPNLGVVSIEGVNNFVIADIPGIIEGASEGVGLGLDFLRHVERTRVLIHVIDISSVEGRDPYDDFLKINEELKRYSVKLYDRPQIIAANKSDMLFDEEKFEEFKTKVEKHGYNKVFKISAATKQGVDDLMKEAARLLSTILVTDLEISEEDRFIEEEKRFTYSIRKEDNTYIVEGSFVDRLLNAVNVNDPDDLRYFHKVLKNKGVMEELMEMGIEDGDVVRLNDFEFDFLL</sequence>
<proteinExistence type="inferred from homology"/>
<organism>
    <name type="scientific">Clostridium botulinum (strain ATCC 19397 / Type A)</name>
    <dbReference type="NCBI Taxonomy" id="441770"/>
    <lineage>
        <taxon>Bacteria</taxon>
        <taxon>Bacillati</taxon>
        <taxon>Bacillota</taxon>
        <taxon>Clostridia</taxon>
        <taxon>Eubacteriales</taxon>
        <taxon>Clostridiaceae</taxon>
        <taxon>Clostridium</taxon>
    </lineage>
</organism>
<feature type="chain" id="PRO_0000385840" description="GTPase Obg">
    <location>
        <begin position="1"/>
        <end position="424"/>
    </location>
</feature>
<feature type="domain" description="Obg" evidence="3">
    <location>
        <begin position="1"/>
        <end position="158"/>
    </location>
</feature>
<feature type="domain" description="OBG-type G" evidence="1">
    <location>
        <begin position="159"/>
        <end position="331"/>
    </location>
</feature>
<feature type="domain" description="OCT" evidence="2">
    <location>
        <begin position="345"/>
        <end position="424"/>
    </location>
</feature>
<feature type="binding site" evidence="1">
    <location>
        <begin position="165"/>
        <end position="172"/>
    </location>
    <ligand>
        <name>GTP</name>
        <dbReference type="ChEBI" id="CHEBI:37565"/>
    </ligand>
</feature>
<feature type="binding site" evidence="1">
    <location>
        <position position="172"/>
    </location>
    <ligand>
        <name>Mg(2+)</name>
        <dbReference type="ChEBI" id="CHEBI:18420"/>
    </ligand>
</feature>
<feature type="binding site" evidence="1">
    <location>
        <begin position="190"/>
        <end position="194"/>
    </location>
    <ligand>
        <name>GTP</name>
        <dbReference type="ChEBI" id="CHEBI:37565"/>
    </ligand>
</feature>
<feature type="binding site" evidence="1">
    <location>
        <position position="192"/>
    </location>
    <ligand>
        <name>Mg(2+)</name>
        <dbReference type="ChEBI" id="CHEBI:18420"/>
    </ligand>
</feature>
<feature type="binding site" evidence="1">
    <location>
        <begin position="212"/>
        <end position="215"/>
    </location>
    <ligand>
        <name>GTP</name>
        <dbReference type="ChEBI" id="CHEBI:37565"/>
    </ligand>
</feature>
<feature type="binding site" evidence="1">
    <location>
        <begin position="282"/>
        <end position="285"/>
    </location>
    <ligand>
        <name>GTP</name>
        <dbReference type="ChEBI" id="CHEBI:37565"/>
    </ligand>
</feature>
<feature type="binding site" evidence="1">
    <location>
        <begin position="312"/>
        <end position="314"/>
    </location>
    <ligand>
        <name>GTP</name>
        <dbReference type="ChEBI" id="CHEBI:37565"/>
    </ligand>
</feature>
<keyword id="KW-0963">Cytoplasm</keyword>
<keyword id="KW-0342">GTP-binding</keyword>
<keyword id="KW-0378">Hydrolase</keyword>
<keyword id="KW-0460">Magnesium</keyword>
<keyword id="KW-0479">Metal-binding</keyword>
<keyword id="KW-0547">Nucleotide-binding</keyword>
<accession>A7FXU6</accession>
<comment type="function">
    <text evidence="1">An essential GTPase which binds GTP, GDP and possibly (p)ppGpp with moderate affinity, with high nucleotide exchange rates and a fairly low GTP hydrolysis rate. Plays a role in control of the cell cycle, stress response, ribosome biogenesis and in those bacteria that undergo differentiation, in morphogenesis control.</text>
</comment>
<comment type="cofactor">
    <cofactor evidence="1">
        <name>Mg(2+)</name>
        <dbReference type="ChEBI" id="CHEBI:18420"/>
    </cofactor>
</comment>
<comment type="subunit">
    <text evidence="1">Monomer.</text>
</comment>
<comment type="subcellular location">
    <subcellularLocation>
        <location evidence="1">Cytoplasm</location>
    </subcellularLocation>
</comment>
<comment type="similarity">
    <text evidence="1">Belongs to the TRAFAC class OBG-HflX-like GTPase superfamily. OBG GTPase family.</text>
</comment>